<sequence>MEVKGKKKFTGKSPQTSQGKNKFHKNSESSSSKTFPRKAVKEGGPKVTSKNFEKGATKPGKKGVKQFKNKPQGGKGPKDKFQKANKFSKKRKFQPDGESDESGAKKPKWDDFKKKKKELKQSRQLSDKTNYDIVVRAKHIWESLRRKDCDKEKRVKLMSDLQKLIQGKIKTIAFAHDSTRVIQCFIQYGNEEQRKQAFQELQGDLVELSKAKYSRNIVKKFLMYGSKPQVAEIIRSFKGHVRKMLRHSEASAIVEYAYNDKAILEQRNMLTEELYGNTFQLYKSADHPTLDKVLELQPAKLELIMDEMKQILTPMAQKEAVIKHSLVHKVFLDFFTYAPPKPRSELIEAIREAVVYLAHTHDGARVAMHCLWHGTPKDRKVIVKTMKTYVEKVANGQYSHLVLLAAFDCIDDTKLVKQIIISEIISSLPSIVNDKYGRKVLLYLMSPRDPAHTVPELIELLQKGDGNAHSKKDTAIRRRELLESISPALLSYLQGHTQEVVLDKSACVLVSDMLGSATGDVQPAMDAIASLAAAELHPGGKDGELHVAEHPAGHLVLKWLLEQDKKMKESGKEGCFAKTLVERVGMKNLKSWASINRGAIILSSLLQSCDQEVVNKVKGGLKPLIPTLEKNKSSSRGIQTLLEKLTA</sequence>
<keyword id="KW-0007">Acetylation</keyword>
<keyword id="KW-0158">Chromosome</keyword>
<keyword id="KW-0238">DNA-binding</keyword>
<keyword id="KW-0539">Nucleus</keyword>
<keyword id="KW-1185">Reference proteome</keyword>
<keyword id="KW-0677">Repeat</keyword>
<keyword id="KW-0694">RNA-binding</keyword>
<name>PUM3_MOUSE</name>
<gene>
    <name evidence="7" type="primary">Pum3</name>
    <name evidence="7" type="synonym">D19Bwg1357e</name>
    <name evidence="7" type="synonym">Kiaa0020</name>
</gene>
<proteinExistence type="evidence at protein level"/>
<reference key="1">
    <citation type="journal article" date="2005" name="Science">
        <title>The transcriptional landscape of the mammalian genome.</title>
        <authorList>
            <person name="Carninci P."/>
            <person name="Kasukawa T."/>
            <person name="Katayama S."/>
            <person name="Gough J."/>
            <person name="Frith M.C."/>
            <person name="Maeda N."/>
            <person name="Oyama R."/>
            <person name="Ravasi T."/>
            <person name="Lenhard B."/>
            <person name="Wells C."/>
            <person name="Kodzius R."/>
            <person name="Shimokawa K."/>
            <person name="Bajic V.B."/>
            <person name="Brenner S.E."/>
            <person name="Batalov S."/>
            <person name="Forrest A.R."/>
            <person name="Zavolan M."/>
            <person name="Davis M.J."/>
            <person name="Wilming L.G."/>
            <person name="Aidinis V."/>
            <person name="Allen J.E."/>
            <person name="Ambesi-Impiombato A."/>
            <person name="Apweiler R."/>
            <person name="Aturaliya R.N."/>
            <person name="Bailey T.L."/>
            <person name="Bansal M."/>
            <person name="Baxter L."/>
            <person name="Beisel K.W."/>
            <person name="Bersano T."/>
            <person name="Bono H."/>
            <person name="Chalk A.M."/>
            <person name="Chiu K.P."/>
            <person name="Choudhary V."/>
            <person name="Christoffels A."/>
            <person name="Clutterbuck D.R."/>
            <person name="Crowe M.L."/>
            <person name="Dalla E."/>
            <person name="Dalrymple B.P."/>
            <person name="de Bono B."/>
            <person name="Della Gatta G."/>
            <person name="di Bernardo D."/>
            <person name="Down T."/>
            <person name="Engstrom P."/>
            <person name="Fagiolini M."/>
            <person name="Faulkner G."/>
            <person name="Fletcher C.F."/>
            <person name="Fukushima T."/>
            <person name="Furuno M."/>
            <person name="Futaki S."/>
            <person name="Gariboldi M."/>
            <person name="Georgii-Hemming P."/>
            <person name="Gingeras T.R."/>
            <person name="Gojobori T."/>
            <person name="Green R.E."/>
            <person name="Gustincich S."/>
            <person name="Harbers M."/>
            <person name="Hayashi Y."/>
            <person name="Hensch T.K."/>
            <person name="Hirokawa N."/>
            <person name="Hill D."/>
            <person name="Huminiecki L."/>
            <person name="Iacono M."/>
            <person name="Ikeo K."/>
            <person name="Iwama A."/>
            <person name="Ishikawa T."/>
            <person name="Jakt M."/>
            <person name="Kanapin A."/>
            <person name="Katoh M."/>
            <person name="Kawasawa Y."/>
            <person name="Kelso J."/>
            <person name="Kitamura H."/>
            <person name="Kitano H."/>
            <person name="Kollias G."/>
            <person name="Krishnan S.P."/>
            <person name="Kruger A."/>
            <person name="Kummerfeld S.K."/>
            <person name="Kurochkin I.V."/>
            <person name="Lareau L.F."/>
            <person name="Lazarevic D."/>
            <person name="Lipovich L."/>
            <person name="Liu J."/>
            <person name="Liuni S."/>
            <person name="McWilliam S."/>
            <person name="Madan Babu M."/>
            <person name="Madera M."/>
            <person name="Marchionni L."/>
            <person name="Matsuda H."/>
            <person name="Matsuzawa S."/>
            <person name="Miki H."/>
            <person name="Mignone F."/>
            <person name="Miyake S."/>
            <person name="Morris K."/>
            <person name="Mottagui-Tabar S."/>
            <person name="Mulder N."/>
            <person name="Nakano N."/>
            <person name="Nakauchi H."/>
            <person name="Ng P."/>
            <person name="Nilsson R."/>
            <person name="Nishiguchi S."/>
            <person name="Nishikawa S."/>
            <person name="Nori F."/>
            <person name="Ohara O."/>
            <person name="Okazaki Y."/>
            <person name="Orlando V."/>
            <person name="Pang K.C."/>
            <person name="Pavan W.J."/>
            <person name="Pavesi G."/>
            <person name="Pesole G."/>
            <person name="Petrovsky N."/>
            <person name="Piazza S."/>
            <person name="Reed J."/>
            <person name="Reid J.F."/>
            <person name="Ring B.Z."/>
            <person name="Ringwald M."/>
            <person name="Rost B."/>
            <person name="Ruan Y."/>
            <person name="Salzberg S.L."/>
            <person name="Sandelin A."/>
            <person name="Schneider C."/>
            <person name="Schoenbach C."/>
            <person name="Sekiguchi K."/>
            <person name="Semple C.A."/>
            <person name="Seno S."/>
            <person name="Sessa L."/>
            <person name="Sheng Y."/>
            <person name="Shibata Y."/>
            <person name="Shimada H."/>
            <person name="Shimada K."/>
            <person name="Silva D."/>
            <person name="Sinclair B."/>
            <person name="Sperling S."/>
            <person name="Stupka E."/>
            <person name="Sugiura K."/>
            <person name="Sultana R."/>
            <person name="Takenaka Y."/>
            <person name="Taki K."/>
            <person name="Tammoja K."/>
            <person name="Tan S.L."/>
            <person name="Tang S."/>
            <person name="Taylor M.S."/>
            <person name="Tegner J."/>
            <person name="Teichmann S.A."/>
            <person name="Ueda H.R."/>
            <person name="van Nimwegen E."/>
            <person name="Verardo R."/>
            <person name="Wei C.L."/>
            <person name="Yagi K."/>
            <person name="Yamanishi H."/>
            <person name="Zabarovsky E."/>
            <person name="Zhu S."/>
            <person name="Zimmer A."/>
            <person name="Hide W."/>
            <person name="Bult C."/>
            <person name="Grimmond S.M."/>
            <person name="Teasdale R.D."/>
            <person name="Liu E.T."/>
            <person name="Brusic V."/>
            <person name="Quackenbush J."/>
            <person name="Wahlestedt C."/>
            <person name="Mattick J.S."/>
            <person name="Hume D.A."/>
            <person name="Kai C."/>
            <person name="Sasaki D."/>
            <person name="Tomaru Y."/>
            <person name="Fukuda S."/>
            <person name="Kanamori-Katayama M."/>
            <person name="Suzuki M."/>
            <person name="Aoki J."/>
            <person name="Arakawa T."/>
            <person name="Iida J."/>
            <person name="Imamura K."/>
            <person name="Itoh M."/>
            <person name="Kato T."/>
            <person name="Kawaji H."/>
            <person name="Kawagashira N."/>
            <person name="Kawashima T."/>
            <person name="Kojima M."/>
            <person name="Kondo S."/>
            <person name="Konno H."/>
            <person name="Nakano K."/>
            <person name="Ninomiya N."/>
            <person name="Nishio T."/>
            <person name="Okada M."/>
            <person name="Plessy C."/>
            <person name="Shibata K."/>
            <person name="Shiraki T."/>
            <person name="Suzuki S."/>
            <person name="Tagami M."/>
            <person name="Waki K."/>
            <person name="Watahiki A."/>
            <person name="Okamura-Oho Y."/>
            <person name="Suzuki H."/>
            <person name="Kawai J."/>
            <person name="Hayashizaki Y."/>
        </authorList>
    </citation>
    <scope>NUCLEOTIDE SEQUENCE [LARGE SCALE MRNA]</scope>
    <source>
        <strain>C57BL/6J</strain>
        <strain>NOD</strain>
        <tissue>Embryo</tissue>
        <tissue>Embryonic spinal ganglion</tissue>
        <tissue>Thymus</tissue>
    </source>
</reference>
<reference key="2">
    <citation type="journal article" date="2004" name="DNA Res.">
        <title>Prediction of the coding sequences of mouse homologues of KIAA gene: IV. The complete nucleotide sequences of 500 mouse KIAA-homologous cDNAs identified by screening of terminal sequences of cDNA clones randomly sampled from size-fractionated libraries.</title>
        <authorList>
            <person name="Okazaki N."/>
            <person name="Kikuno R."/>
            <person name="Ohara R."/>
            <person name="Inamoto S."/>
            <person name="Koseki H."/>
            <person name="Hiraoka S."/>
            <person name="Saga Y."/>
            <person name="Seino S."/>
            <person name="Nishimura M."/>
            <person name="Kaisho T."/>
            <person name="Hoshino K."/>
            <person name="Kitamura H."/>
            <person name="Nagase T."/>
            <person name="Ohara O."/>
            <person name="Koga H."/>
        </authorList>
    </citation>
    <scope>NUCLEOTIDE SEQUENCE [LARGE SCALE MRNA] OF 152-647</scope>
</reference>
<reference key="3">
    <citation type="journal article" date="2009" name="PLoS ONE">
        <title>A novel puf-A gene predicted from evolutionary analysis is involved in the development of eyes and primordial germ-cells.</title>
        <authorList>
            <person name="Kuo M.W."/>
            <person name="Wang S.H."/>
            <person name="Chang J.C."/>
            <person name="Chang C.H."/>
            <person name="Huang L.J."/>
            <person name="Lin H.H."/>
            <person name="Yu A.L."/>
            <person name="Li W.H."/>
            <person name="Yu J."/>
        </authorList>
    </citation>
    <scope>TISSUE SPECIFICITY</scope>
</reference>
<reference key="4">
    <citation type="journal article" date="2010" name="Cell">
        <title>A tissue-specific atlas of mouse protein phosphorylation and expression.</title>
        <authorList>
            <person name="Huttlin E.L."/>
            <person name="Jedrychowski M.P."/>
            <person name="Elias J.E."/>
            <person name="Goswami T."/>
            <person name="Rad R."/>
            <person name="Beausoleil S.A."/>
            <person name="Villen J."/>
            <person name="Haas W."/>
            <person name="Sowa M.E."/>
            <person name="Gygi S.P."/>
        </authorList>
    </citation>
    <scope>IDENTIFICATION BY MASS SPECTROMETRY [LARGE SCALE ANALYSIS]</scope>
    <source>
        <tissue>Pancreas</tissue>
        <tissue>Spleen</tissue>
    </source>
</reference>
<reference key="5">
    <citation type="journal article" date="2013" name="Mol. Cell">
        <title>SIRT5-mediated lysine desuccinylation impacts diverse metabolic pathways.</title>
        <authorList>
            <person name="Park J."/>
            <person name="Chen Y."/>
            <person name="Tishkoff D.X."/>
            <person name="Peng C."/>
            <person name="Tan M."/>
            <person name="Dai L."/>
            <person name="Xie Z."/>
            <person name="Zhang Y."/>
            <person name="Zwaans B.M."/>
            <person name="Skinner M.E."/>
            <person name="Lombard D.B."/>
            <person name="Zhao Y."/>
        </authorList>
    </citation>
    <scope>ACETYLATION [LARGE SCALE ANALYSIS] AT LYS-33</scope>
    <scope>IDENTIFICATION BY MASS SPECTROMETRY [LARGE SCALE ANALYSIS]</scope>
    <source>
        <tissue>Embryonic fibroblast</tissue>
    </source>
</reference>
<comment type="function">
    <text evidence="1 2">Inhibits the poly(ADP-ribosyl)ation activity of PARP1 and the degradation of PARP1 by CASP3 following genotoxic stress. Binds to double-stranded RNA or DNA without sequence specificity. Involved in development of the eye and of primordial germ cells.</text>
</comment>
<comment type="subunit">
    <text evidence="1">Interacts with PARP1 (via catalytic domain).</text>
</comment>
<comment type="subcellular location">
    <subcellularLocation>
        <location evidence="1">Nucleus</location>
        <location evidence="1">Nucleolus</location>
    </subcellularLocation>
    <subcellularLocation>
        <location evidence="1">Nucleus</location>
        <location evidence="1">Nucleoplasm</location>
    </subcellularLocation>
    <subcellularLocation>
        <location evidence="1">Chromosome</location>
    </subcellularLocation>
    <text evidence="1">Localizes predominantly in the nucleolus with minor punctate signals in the nucleoplasm.</text>
</comment>
<comment type="tissue specificity">
    <text evidence="5">In the adult eye, expressed primarily in retinal ganglion cells and, to a lesser extent, in the pigmented cells.</text>
</comment>
<comment type="domain">
    <text evidence="1">A 90 degree bend between Pumilio repeats 3 and 4 gives rise to a L-shaped protein.</text>
</comment>
<comment type="sequence caution" evidence="6">
    <conflict type="erroneous initiation">
        <sequence resource="EMBL-CDS" id="BAC34427"/>
    </conflict>
    <text>Extended N-terminus.</text>
</comment>
<comment type="sequence caution" evidence="6">
    <conflict type="frameshift">
        <sequence resource="EMBL-CDS" id="BAC40135"/>
    </conflict>
</comment>
<comment type="sequence caution" evidence="6">
    <conflict type="erroneous initiation">
        <sequence resource="EMBL-CDS" id="BAE24873"/>
    </conflict>
    <text>Extended N-terminus.</text>
</comment>
<dbReference type="EMBL" id="AK050829">
    <property type="protein sequence ID" value="BAC34427.1"/>
    <property type="status" value="ALT_INIT"/>
    <property type="molecule type" value="mRNA"/>
</dbReference>
<dbReference type="EMBL" id="AK088081">
    <property type="protein sequence ID" value="BAC40135.1"/>
    <property type="status" value="ALT_FRAME"/>
    <property type="molecule type" value="mRNA"/>
</dbReference>
<dbReference type="EMBL" id="AK141893">
    <property type="protein sequence ID" value="BAE24873.1"/>
    <property type="status" value="ALT_INIT"/>
    <property type="molecule type" value="mRNA"/>
</dbReference>
<dbReference type="EMBL" id="AK172872">
    <property type="protein sequence ID" value="BAD32150.1"/>
    <property type="molecule type" value="mRNA"/>
</dbReference>
<dbReference type="RefSeq" id="NP_803425.1">
    <property type="nucleotide sequence ID" value="NM_177474.5"/>
</dbReference>
<dbReference type="RefSeq" id="XP_006527246.1">
    <property type="nucleotide sequence ID" value="XM_006527183.3"/>
</dbReference>
<dbReference type="SMR" id="Q8BKS9"/>
<dbReference type="BioGRID" id="206863">
    <property type="interactions" value="5"/>
</dbReference>
<dbReference type="FunCoup" id="Q8BKS9">
    <property type="interactions" value="2870"/>
</dbReference>
<dbReference type="STRING" id="10090.ENSMUSP00000075573"/>
<dbReference type="iPTMnet" id="Q8BKS9"/>
<dbReference type="PhosphoSitePlus" id="Q8BKS9"/>
<dbReference type="PaxDb" id="10090-ENSMUSP00000075573"/>
<dbReference type="PeptideAtlas" id="Q8BKS9"/>
<dbReference type="ProteomicsDB" id="301926"/>
<dbReference type="Pumba" id="Q8BKS9"/>
<dbReference type="DNASU" id="52874"/>
<dbReference type="Ensembl" id="ENSMUST00000076219.7">
    <property type="protein sequence ID" value="ENSMUSP00000075573.6"/>
    <property type="gene ID" value="ENSMUSG00000041360.9"/>
</dbReference>
<dbReference type="Ensembl" id="ENSMUST00000236702.3">
    <property type="protein sequence ID" value="ENSMUSP00000157590.3"/>
    <property type="gene ID" value="ENSMUSG00000041360.9"/>
</dbReference>
<dbReference type="GeneID" id="52874"/>
<dbReference type="KEGG" id="mmu:52874"/>
<dbReference type="UCSC" id="uc008hby.1">
    <property type="organism name" value="mouse"/>
</dbReference>
<dbReference type="AGR" id="MGI:106253"/>
<dbReference type="CTD" id="9933"/>
<dbReference type="MGI" id="MGI:106253">
    <property type="gene designation" value="Pum3"/>
</dbReference>
<dbReference type="eggNOG" id="KOG2050">
    <property type="taxonomic scope" value="Eukaryota"/>
</dbReference>
<dbReference type="GeneTree" id="ENSGT00390000015757"/>
<dbReference type="InParanoid" id="Q8BKS9"/>
<dbReference type="OMA" id="YGPEFSI"/>
<dbReference type="OrthoDB" id="497380at2759"/>
<dbReference type="PhylomeDB" id="Q8BKS9"/>
<dbReference type="TreeFam" id="TF312954"/>
<dbReference type="BioGRID-ORCS" id="52874">
    <property type="hits" value="4 hits in 45 CRISPR screens"/>
</dbReference>
<dbReference type="ChiTaRS" id="Pum3">
    <property type="organism name" value="mouse"/>
</dbReference>
<dbReference type="PRO" id="PR:Q8BKS9"/>
<dbReference type="Proteomes" id="UP000000589">
    <property type="component" value="Chromosome 19"/>
</dbReference>
<dbReference type="RNAct" id="Q8BKS9">
    <property type="molecule type" value="protein"/>
</dbReference>
<dbReference type="GO" id="GO:0005694">
    <property type="term" value="C:chromosome"/>
    <property type="evidence" value="ECO:0000250"/>
    <property type="project" value="UniProtKB"/>
</dbReference>
<dbReference type="GO" id="GO:0005783">
    <property type="term" value="C:endoplasmic reticulum"/>
    <property type="evidence" value="ECO:0007669"/>
    <property type="project" value="Ensembl"/>
</dbReference>
<dbReference type="GO" id="GO:0005730">
    <property type="term" value="C:nucleolus"/>
    <property type="evidence" value="ECO:0000250"/>
    <property type="project" value="UniProtKB"/>
</dbReference>
<dbReference type="GO" id="GO:0005654">
    <property type="term" value="C:nucleoplasm"/>
    <property type="evidence" value="ECO:0000250"/>
    <property type="project" value="UniProtKB"/>
</dbReference>
<dbReference type="GO" id="GO:0003677">
    <property type="term" value="F:DNA binding"/>
    <property type="evidence" value="ECO:0007669"/>
    <property type="project" value="UniProtKB-KW"/>
</dbReference>
<dbReference type="GO" id="GO:0003723">
    <property type="term" value="F:RNA binding"/>
    <property type="evidence" value="ECO:0007669"/>
    <property type="project" value="UniProtKB-KW"/>
</dbReference>
<dbReference type="GO" id="GO:0010835">
    <property type="term" value="P:regulation of protein ADP-ribosylation"/>
    <property type="evidence" value="ECO:0000250"/>
    <property type="project" value="UniProtKB"/>
</dbReference>
<dbReference type="FunFam" id="1.25.10.10:FF:000207">
    <property type="entry name" value="Pumilio RNA-binding family member 3"/>
    <property type="match status" value="1"/>
</dbReference>
<dbReference type="FunFam" id="1.25.10.10:FF:001092">
    <property type="entry name" value="Pumilio RNA-binding family member 3"/>
    <property type="match status" value="1"/>
</dbReference>
<dbReference type="Gene3D" id="1.25.10.10">
    <property type="entry name" value="Leucine-rich Repeat Variant"/>
    <property type="match status" value="2"/>
</dbReference>
<dbReference type="InterPro" id="IPR011989">
    <property type="entry name" value="ARM-like"/>
</dbReference>
<dbReference type="InterPro" id="IPR016024">
    <property type="entry name" value="ARM-type_fold"/>
</dbReference>
<dbReference type="InterPro" id="IPR012959">
    <property type="entry name" value="CPL_dom"/>
</dbReference>
<dbReference type="InterPro" id="IPR033133">
    <property type="entry name" value="PUM-HD"/>
</dbReference>
<dbReference type="InterPro" id="IPR040059">
    <property type="entry name" value="PUM3"/>
</dbReference>
<dbReference type="InterPro" id="IPR001313">
    <property type="entry name" value="Pumilio_RNA-bd_rpt"/>
</dbReference>
<dbReference type="PANTHER" id="PTHR13389">
    <property type="entry name" value="PUMILIO HOMOLOG 3"/>
    <property type="match status" value="1"/>
</dbReference>
<dbReference type="PANTHER" id="PTHR13389:SF0">
    <property type="entry name" value="PUMILIO HOMOLOG 3"/>
    <property type="match status" value="1"/>
</dbReference>
<dbReference type="Pfam" id="PF08144">
    <property type="entry name" value="CPL"/>
    <property type="match status" value="1"/>
</dbReference>
<dbReference type="SMART" id="SM00025">
    <property type="entry name" value="Pumilio"/>
    <property type="match status" value="6"/>
</dbReference>
<dbReference type="SUPFAM" id="SSF48371">
    <property type="entry name" value="ARM repeat"/>
    <property type="match status" value="2"/>
</dbReference>
<dbReference type="PROSITE" id="PS50302">
    <property type="entry name" value="PUM"/>
    <property type="match status" value="6"/>
</dbReference>
<dbReference type="PROSITE" id="PS50303">
    <property type="entry name" value="PUM_HD"/>
    <property type="match status" value="1"/>
</dbReference>
<evidence type="ECO:0000250" key="1">
    <source>
        <dbReference type="UniProtKB" id="Q15397"/>
    </source>
</evidence>
<evidence type="ECO:0000250" key="2">
    <source>
        <dbReference type="UniProtKB" id="X1WGX5"/>
    </source>
</evidence>
<evidence type="ECO:0000255" key="3">
    <source>
        <dbReference type="PROSITE-ProRule" id="PRU00318"/>
    </source>
</evidence>
<evidence type="ECO:0000256" key="4">
    <source>
        <dbReference type="SAM" id="MobiDB-lite"/>
    </source>
</evidence>
<evidence type="ECO:0000269" key="5">
    <source>
    </source>
</evidence>
<evidence type="ECO:0000305" key="6"/>
<evidence type="ECO:0000312" key="7">
    <source>
        <dbReference type="MGI" id="MGI:106253"/>
    </source>
</evidence>
<evidence type="ECO:0007744" key="8">
    <source>
    </source>
</evidence>
<protein>
    <recommendedName>
        <fullName evidence="6">Pumilio homolog 3</fullName>
    </recommendedName>
</protein>
<accession>Q8BKS9</accession>
<accession>Q6A0E6</accession>
<accession>Q8BU15</accession>
<organism>
    <name type="scientific">Mus musculus</name>
    <name type="common">Mouse</name>
    <dbReference type="NCBI Taxonomy" id="10090"/>
    <lineage>
        <taxon>Eukaryota</taxon>
        <taxon>Metazoa</taxon>
        <taxon>Chordata</taxon>
        <taxon>Craniata</taxon>
        <taxon>Vertebrata</taxon>
        <taxon>Euteleostomi</taxon>
        <taxon>Mammalia</taxon>
        <taxon>Eutheria</taxon>
        <taxon>Euarchontoglires</taxon>
        <taxon>Glires</taxon>
        <taxon>Rodentia</taxon>
        <taxon>Myomorpha</taxon>
        <taxon>Muroidea</taxon>
        <taxon>Muridae</taxon>
        <taxon>Murinae</taxon>
        <taxon>Mus</taxon>
        <taxon>Mus</taxon>
    </lineage>
</organism>
<feature type="chain" id="PRO_0000075930" description="Pumilio homolog 3">
    <location>
        <begin position="1"/>
        <end position="647"/>
    </location>
</feature>
<feature type="domain" description="PUM-HD" evidence="3">
    <location>
        <begin position="142"/>
        <end position="509"/>
    </location>
</feature>
<feature type="repeat" description="Pumilio 1" evidence="1">
    <location>
        <begin position="176"/>
        <end position="211"/>
    </location>
</feature>
<feature type="repeat" description="Pumilio 2" evidence="1">
    <location>
        <begin position="212"/>
        <end position="247"/>
    </location>
</feature>
<feature type="repeat" description="Pumilio 3" evidence="1">
    <location>
        <begin position="248"/>
        <end position="276"/>
    </location>
</feature>
<feature type="repeat" description="Pumilio 4" evidence="1">
    <location>
        <begin position="288"/>
        <end position="324"/>
    </location>
</feature>
<feature type="repeat" description="Pumilio 5" evidence="1">
    <location>
        <begin position="325"/>
        <end position="360"/>
    </location>
</feature>
<feature type="repeat" description="Pumilio 6" evidence="1">
    <location>
        <begin position="361"/>
        <end position="396"/>
    </location>
</feature>
<feature type="repeat" description="Pumilio 7" evidence="1">
    <location>
        <begin position="397"/>
        <end position="434"/>
    </location>
</feature>
<feature type="repeat" description="Pumilio 8" evidence="1">
    <location>
        <begin position="435"/>
        <end position="503"/>
    </location>
</feature>
<feature type="repeat" description="Pumilio 9" evidence="1">
    <location>
        <begin position="504"/>
        <end position="550"/>
    </location>
</feature>
<feature type="repeat" description="Pumilio 10" evidence="1">
    <location>
        <begin position="551"/>
        <end position="595"/>
    </location>
</feature>
<feature type="repeat" description="Pumilio 11" evidence="1">
    <location>
        <begin position="596"/>
        <end position="635"/>
    </location>
</feature>
<feature type="region of interest" description="Disordered" evidence="4">
    <location>
        <begin position="1"/>
        <end position="123"/>
    </location>
</feature>
<feature type="short sequence motif" description="Nuclear localization signal" evidence="1">
    <location>
        <begin position="105"/>
        <end position="117"/>
    </location>
</feature>
<feature type="compositionally biased region" description="Basic residues" evidence="4">
    <location>
        <begin position="1"/>
        <end position="10"/>
    </location>
</feature>
<feature type="compositionally biased region" description="Basic residues" evidence="4">
    <location>
        <begin position="59"/>
        <end position="68"/>
    </location>
</feature>
<feature type="compositionally biased region" description="Basic and acidic residues" evidence="4">
    <location>
        <begin position="102"/>
        <end position="123"/>
    </location>
</feature>
<feature type="modified residue" description="N6-acetyllysine" evidence="8">
    <location>
        <position position="33"/>
    </location>
</feature>